<dbReference type="EMBL" id="CP000302">
    <property type="protein sequence ID" value="ABE53473.1"/>
    <property type="molecule type" value="Genomic_DNA"/>
</dbReference>
<dbReference type="RefSeq" id="WP_011494640.1">
    <property type="nucleotide sequence ID" value="NC_007954.1"/>
</dbReference>
<dbReference type="SMR" id="Q12SV3"/>
<dbReference type="STRING" id="318161.Sden_0176"/>
<dbReference type="KEGG" id="sdn:Sden_0176"/>
<dbReference type="eggNOG" id="COG0092">
    <property type="taxonomic scope" value="Bacteria"/>
</dbReference>
<dbReference type="HOGENOM" id="CLU_058591_0_2_6"/>
<dbReference type="OrthoDB" id="9806396at2"/>
<dbReference type="Proteomes" id="UP000001982">
    <property type="component" value="Chromosome"/>
</dbReference>
<dbReference type="GO" id="GO:0022627">
    <property type="term" value="C:cytosolic small ribosomal subunit"/>
    <property type="evidence" value="ECO:0007669"/>
    <property type="project" value="TreeGrafter"/>
</dbReference>
<dbReference type="GO" id="GO:0003729">
    <property type="term" value="F:mRNA binding"/>
    <property type="evidence" value="ECO:0007669"/>
    <property type="project" value="UniProtKB-UniRule"/>
</dbReference>
<dbReference type="GO" id="GO:0019843">
    <property type="term" value="F:rRNA binding"/>
    <property type="evidence" value="ECO:0007669"/>
    <property type="project" value="UniProtKB-UniRule"/>
</dbReference>
<dbReference type="GO" id="GO:0003735">
    <property type="term" value="F:structural constituent of ribosome"/>
    <property type="evidence" value="ECO:0007669"/>
    <property type="project" value="InterPro"/>
</dbReference>
<dbReference type="GO" id="GO:0006412">
    <property type="term" value="P:translation"/>
    <property type="evidence" value="ECO:0007669"/>
    <property type="project" value="UniProtKB-UniRule"/>
</dbReference>
<dbReference type="CDD" id="cd02412">
    <property type="entry name" value="KH-II_30S_S3"/>
    <property type="match status" value="1"/>
</dbReference>
<dbReference type="FunFam" id="3.30.1140.32:FF:000001">
    <property type="entry name" value="30S ribosomal protein S3"/>
    <property type="match status" value="1"/>
</dbReference>
<dbReference type="FunFam" id="3.30.300.20:FF:000001">
    <property type="entry name" value="30S ribosomal protein S3"/>
    <property type="match status" value="1"/>
</dbReference>
<dbReference type="Gene3D" id="3.30.300.20">
    <property type="match status" value="1"/>
</dbReference>
<dbReference type="Gene3D" id="3.30.1140.32">
    <property type="entry name" value="Ribosomal protein S3, C-terminal domain"/>
    <property type="match status" value="1"/>
</dbReference>
<dbReference type="HAMAP" id="MF_01309_B">
    <property type="entry name" value="Ribosomal_uS3_B"/>
    <property type="match status" value="1"/>
</dbReference>
<dbReference type="InterPro" id="IPR004087">
    <property type="entry name" value="KH_dom"/>
</dbReference>
<dbReference type="InterPro" id="IPR015946">
    <property type="entry name" value="KH_dom-like_a/b"/>
</dbReference>
<dbReference type="InterPro" id="IPR004044">
    <property type="entry name" value="KH_dom_type_2"/>
</dbReference>
<dbReference type="InterPro" id="IPR009019">
    <property type="entry name" value="KH_sf_prok-type"/>
</dbReference>
<dbReference type="InterPro" id="IPR036419">
    <property type="entry name" value="Ribosomal_S3_C_sf"/>
</dbReference>
<dbReference type="InterPro" id="IPR005704">
    <property type="entry name" value="Ribosomal_uS3_bac-typ"/>
</dbReference>
<dbReference type="InterPro" id="IPR001351">
    <property type="entry name" value="Ribosomal_uS3_C"/>
</dbReference>
<dbReference type="InterPro" id="IPR018280">
    <property type="entry name" value="Ribosomal_uS3_CS"/>
</dbReference>
<dbReference type="NCBIfam" id="TIGR01009">
    <property type="entry name" value="rpsC_bact"/>
    <property type="match status" value="1"/>
</dbReference>
<dbReference type="PANTHER" id="PTHR11760">
    <property type="entry name" value="30S/40S RIBOSOMAL PROTEIN S3"/>
    <property type="match status" value="1"/>
</dbReference>
<dbReference type="PANTHER" id="PTHR11760:SF19">
    <property type="entry name" value="SMALL RIBOSOMAL SUBUNIT PROTEIN US3C"/>
    <property type="match status" value="1"/>
</dbReference>
<dbReference type="Pfam" id="PF07650">
    <property type="entry name" value="KH_2"/>
    <property type="match status" value="1"/>
</dbReference>
<dbReference type="Pfam" id="PF00189">
    <property type="entry name" value="Ribosomal_S3_C"/>
    <property type="match status" value="1"/>
</dbReference>
<dbReference type="SMART" id="SM00322">
    <property type="entry name" value="KH"/>
    <property type="match status" value="1"/>
</dbReference>
<dbReference type="SUPFAM" id="SSF54814">
    <property type="entry name" value="Prokaryotic type KH domain (KH-domain type II)"/>
    <property type="match status" value="1"/>
</dbReference>
<dbReference type="SUPFAM" id="SSF54821">
    <property type="entry name" value="Ribosomal protein S3 C-terminal domain"/>
    <property type="match status" value="1"/>
</dbReference>
<dbReference type="PROSITE" id="PS50823">
    <property type="entry name" value="KH_TYPE_2"/>
    <property type="match status" value="1"/>
</dbReference>
<dbReference type="PROSITE" id="PS00548">
    <property type="entry name" value="RIBOSOMAL_S3"/>
    <property type="match status" value="1"/>
</dbReference>
<sequence>MGQKVHPNGIRLGITKPWISTWYADKSDYANNLNSDWEVRQYLTEKLKAASVSKIVIERPAKSIRVTIHTARPGVVIGKKGEDVEVLRAQVAKITGTTAQINIAEIRKPELDAKLVADSIAQQLERRVMFRRAMKRAVQNAMRIGAQGIKVEVSGRLGGAEIARSEWYREGRVPLHTLRADIDYSTSESHTQYGVIGVKVWIFKGEVLDGLVPQIEEPKQQPKRKPRAK</sequence>
<evidence type="ECO:0000255" key="1">
    <source>
        <dbReference type="HAMAP-Rule" id="MF_01309"/>
    </source>
</evidence>
<evidence type="ECO:0000305" key="2"/>
<proteinExistence type="inferred from homology"/>
<reference key="1">
    <citation type="submission" date="2006-03" db="EMBL/GenBank/DDBJ databases">
        <title>Complete sequence of Shewanella denitrificans OS217.</title>
        <authorList>
            <consortium name="US DOE Joint Genome Institute"/>
            <person name="Copeland A."/>
            <person name="Lucas S."/>
            <person name="Lapidus A."/>
            <person name="Barry K."/>
            <person name="Detter J.C."/>
            <person name="Glavina del Rio T."/>
            <person name="Hammon N."/>
            <person name="Israni S."/>
            <person name="Dalin E."/>
            <person name="Tice H."/>
            <person name="Pitluck S."/>
            <person name="Brettin T."/>
            <person name="Bruce D."/>
            <person name="Han C."/>
            <person name="Tapia R."/>
            <person name="Gilna P."/>
            <person name="Kiss H."/>
            <person name="Schmutz J."/>
            <person name="Larimer F."/>
            <person name="Land M."/>
            <person name="Hauser L."/>
            <person name="Kyrpides N."/>
            <person name="Lykidis A."/>
            <person name="Richardson P."/>
        </authorList>
    </citation>
    <scope>NUCLEOTIDE SEQUENCE [LARGE SCALE GENOMIC DNA]</scope>
    <source>
        <strain>OS217 / ATCC BAA-1090 / DSM 15013</strain>
    </source>
</reference>
<name>RS3_SHEDO</name>
<organism>
    <name type="scientific">Shewanella denitrificans (strain OS217 / ATCC BAA-1090 / DSM 15013)</name>
    <dbReference type="NCBI Taxonomy" id="318161"/>
    <lineage>
        <taxon>Bacteria</taxon>
        <taxon>Pseudomonadati</taxon>
        <taxon>Pseudomonadota</taxon>
        <taxon>Gammaproteobacteria</taxon>
        <taxon>Alteromonadales</taxon>
        <taxon>Shewanellaceae</taxon>
        <taxon>Shewanella</taxon>
    </lineage>
</organism>
<comment type="function">
    <text evidence="1">Binds the lower part of the 30S subunit head. Binds mRNA in the 70S ribosome, positioning it for translation.</text>
</comment>
<comment type="subunit">
    <text evidence="1">Part of the 30S ribosomal subunit. Forms a tight complex with proteins S10 and S14.</text>
</comment>
<comment type="similarity">
    <text evidence="1">Belongs to the universal ribosomal protein uS3 family.</text>
</comment>
<accession>Q12SV3</accession>
<gene>
    <name evidence="1" type="primary">rpsC</name>
    <name type="ordered locus">Sden_0176</name>
</gene>
<feature type="chain" id="PRO_0000293879" description="Small ribosomal subunit protein uS3">
    <location>
        <begin position="1"/>
        <end position="229"/>
    </location>
</feature>
<feature type="domain" description="KH type-2" evidence="1">
    <location>
        <begin position="39"/>
        <end position="107"/>
    </location>
</feature>
<keyword id="KW-1185">Reference proteome</keyword>
<keyword id="KW-0687">Ribonucleoprotein</keyword>
<keyword id="KW-0689">Ribosomal protein</keyword>
<keyword id="KW-0694">RNA-binding</keyword>
<keyword id="KW-0699">rRNA-binding</keyword>
<protein>
    <recommendedName>
        <fullName evidence="1">Small ribosomal subunit protein uS3</fullName>
    </recommendedName>
    <alternativeName>
        <fullName evidence="2">30S ribosomal protein S3</fullName>
    </alternativeName>
</protein>